<dbReference type="EC" id="1.5.5.1"/>
<dbReference type="EMBL" id="AY365022">
    <property type="protein sequence ID" value="AAQ67364.1"/>
    <property type="molecule type" value="mRNA"/>
</dbReference>
<dbReference type="SMR" id="Q6UPE1"/>
<dbReference type="FunCoup" id="Q6UPE1">
    <property type="interactions" value="2680"/>
</dbReference>
<dbReference type="STRING" id="10116.ENSRNOP00000013262"/>
<dbReference type="CarbonylDB" id="Q6UPE1"/>
<dbReference type="iPTMnet" id="Q6UPE1"/>
<dbReference type="PhosphoSitePlus" id="Q6UPE1"/>
<dbReference type="SwissPalm" id="Q6UPE1"/>
<dbReference type="jPOST" id="Q6UPE1"/>
<dbReference type="PaxDb" id="10116-ENSRNOP00000013262"/>
<dbReference type="UCSC" id="RGD:735052">
    <property type="organism name" value="rat"/>
</dbReference>
<dbReference type="AGR" id="RGD:735052"/>
<dbReference type="RGD" id="735052">
    <property type="gene designation" value="Etfdh"/>
</dbReference>
<dbReference type="eggNOG" id="KOG2415">
    <property type="taxonomic scope" value="Eukaryota"/>
</dbReference>
<dbReference type="InParanoid" id="Q6UPE1"/>
<dbReference type="PhylomeDB" id="Q6UPE1"/>
<dbReference type="Reactome" id="R-RNO-611105">
    <property type="pathway name" value="Respiratory electron transport"/>
</dbReference>
<dbReference type="PRO" id="PR:Q6UPE1"/>
<dbReference type="Proteomes" id="UP000002494">
    <property type="component" value="Unplaced"/>
</dbReference>
<dbReference type="GO" id="GO:0016020">
    <property type="term" value="C:membrane"/>
    <property type="evidence" value="ECO:0000266"/>
    <property type="project" value="RGD"/>
</dbReference>
<dbReference type="GO" id="GO:0005743">
    <property type="term" value="C:mitochondrial inner membrane"/>
    <property type="evidence" value="ECO:0000266"/>
    <property type="project" value="RGD"/>
</dbReference>
<dbReference type="GO" id="GO:0031966">
    <property type="term" value="C:mitochondrial membrane"/>
    <property type="evidence" value="ECO:0000314"/>
    <property type="project" value="RGD"/>
</dbReference>
<dbReference type="GO" id="GO:0005739">
    <property type="term" value="C:mitochondrion"/>
    <property type="evidence" value="ECO:0000266"/>
    <property type="project" value="RGD"/>
</dbReference>
<dbReference type="GO" id="GO:0051539">
    <property type="term" value="F:4 iron, 4 sulfur cluster binding"/>
    <property type="evidence" value="ECO:0000266"/>
    <property type="project" value="RGD"/>
</dbReference>
<dbReference type="GO" id="GO:0009055">
    <property type="term" value="F:electron transfer activity"/>
    <property type="evidence" value="ECO:0000314"/>
    <property type="project" value="UniProtKB"/>
</dbReference>
<dbReference type="GO" id="GO:0004174">
    <property type="term" value="F:electron-transferring-flavoprotein dehydrogenase activity"/>
    <property type="evidence" value="ECO:0000266"/>
    <property type="project" value="RGD"/>
</dbReference>
<dbReference type="GO" id="GO:0050660">
    <property type="term" value="F:flavin adenine dinucleotide binding"/>
    <property type="evidence" value="ECO:0000266"/>
    <property type="project" value="RGD"/>
</dbReference>
<dbReference type="GO" id="GO:0051536">
    <property type="term" value="F:iron-sulfur cluster binding"/>
    <property type="evidence" value="ECO:0000314"/>
    <property type="project" value="RGD"/>
</dbReference>
<dbReference type="GO" id="GO:0046872">
    <property type="term" value="F:metal ion binding"/>
    <property type="evidence" value="ECO:0007669"/>
    <property type="project" value="UniProtKB-KW"/>
</dbReference>
<dbReference type="GO" id="GO:0016491">
    <property type="term" value="F:oxidoreductase activity"/>
    <property type="evidence" value="ECO:0000266"/>
    <property type="project" value="RGD"/>
</dbReference>
<dbReference type="GO" id="GO:0048038">
    <property type="term" value="F:quinone binding"/>
    <property type="evidence" value="ECO:0000266"/>
    <property type="project" value="RGD"/>
</dbReference>
<dbReference type="GO" id="GO:0048039">
    <property type="term" value="F:ubiquinone binding"/>
    <property type="evidence" value="ECO:0000266"/>
    <property type="project" value="RGD"/>
</dbReference>
<dbReference type="GO" id="GO:0022900">
    <property type="term" value="P:electron transport chain"/>
    <property type="evidence" value="ECO:0000266"/>
    <property type="project" value="RGD"/>
</dbReference>
<dbReference type="GO" id="GO:0033539">
    <property type="term" value="P:fatty acid beta-oxidation using acyl-CoA dehydrogenase"/>
    <property type="evidence" value="ECO:0000266"/>
    <property type="project" value="RGD"/>
</dbReference>
<dbReference type="GO" id="GO:0006979">
    <property type="term" value="P:response to oxidative stress"/>
    <property type="evidence" value="ECO:0000250"/>
    <property type="project" value="UniProtKB"/>
</dbReference>
<dbReference type="FunFam" id="3.30.70.20:FF:000088">
    <property type="entry name" value="Electron transfer flavoprotein-ubiquinone oxidoreductase, mitochondrial"/>
    <property type="match status" value="1"/>
</dbReference>
<dbReference type="Gene3D" id="3.30.70.20">
    <property type="match status" value="1"/>
</dbReference>
<dbReference type="Gene3D" id="3.30.9.90">
    <property type="match status" value="1"/>
</dbReference>
<dbReference type="Gene3D" id="3.50.50.60">
    <property type="entry name" value="FAD/NAD(P)-binding domain"/>
    <property type="match status" value="1"/>
</dbReference>
<dbReference type="InterPro" id="IPR017896">
    <property type="entry name" value="4Fe4S_Fe-S-bd"/>
</dbReference>
<dbReference type="InterPro" id="IPR040156">
    <property type="entry name" value="ETF-QO"/>
</dbReference>
<dbReference type="InterPro" id="IPR049398">
    <property type="entry name" value="ETF-QO/FixC_UQ-bd"/>
</dbReference>
<dbReference type="InterPro" id="IPR007859">
    <property type="entry name" value="ETF-QO/FixX_C"/>
</dbReference>
<dbReference type="InterPro" id="IPR036188">
    <property type="entry name" value="FAD/NAD-bd_sf"/>
</dbReference>
<dbReference type="PANTHER" id="PTHR10617">
    <property type="entry name" value="ELECTRON TRANSFER FLAVOPROTEIN-UBIQUINONE OXIDOREDUCTASE"/>
    <property type="match status" value="1"/>
</dbReference>
<dbReference type="PANTHER" id="PTHR10617:SF107">
    <property type="entry name" value="ELECTRON TRANSFER FLAVOPROTEIN-UBIQUINONE OXIDOREDUCTASE, MITOCHONDRIAL"/>
    <property type="match status" value="1"/>
</dbReference>
<dbReference type="Pfam" id="PF21162">
    <property type="entry name" value="ETFQO_UQ-bd"/>
    <property type="match status" value="1"/>
</dbReference>
<dbReference type="Pfam" id="PF05187">
    <property type="entry name" value="Fer4_ETF_QO"/>
    <property type="match status" value="1"/>
</dbReference>
<dbReference type="Pfam" id="PF01946">
    <property type="entry name" value="Thi4"/>
    <property type="match status" value="1"/>
</dbReference>
<dbReference type="PRINTS" id="PR00469">
    <property type="entry name" value="PNDRDTASEII"/>
</dbReference>
<dbReference type="SUPFAM" id="SSF54862">
    <property type="entry name" value="4Fe-4S ferredoxins"/>
    <property type="match status" value="1"/>
</dbReference>
<dbReference type="SUPFAM" id="SSF54373">
    <property type="entry name" value="FAD-linked reductases, C-terminal domain"/>
    <property type="match status" value="1"/>
</dbReference>
<dbReference type="SUPFAM" id="SSF51905">
    <property type="entry name" value="FAD/NAD(P)-binding domain"/>
    <property type="match status" value="1"/>
</dbReference>
<dbReference type="PROSITE" id="PS51379">
    <property type="entry name" value="4FE4S_FER_2"/>
    <property type="match status" value="1"/>
</dbReference>
<organism>
    <name type="scientific">Rattus norvegicus</name>
    <name type="common">Rat</name>
    <dbReference type="NCBI Taxonomy" id="10116"/>
    <lineage>
        <taxon>Eukaryota</taxon>
        <taxon>Metazoa</taxon>
        <taxon>Chordata</taxon>
        <taxon>Craniata</taxon>
        <taxon>Vertebrata</taxon>
        <taxon>Euteleostomi</taxon>
        <taxon>Mammalia</taxon>
        <taxon>Eutheria</taxon>
        <taxon>Euarchontoglires</taxon>
        <taxon>Glires</taxon>
        <taxon>Rodentia</taxon>
        <taxon>Myomorpha</taxon>
        <taxon>Muroidea</taxon>
        <taxon>Muridae</taxon>
        <taxon>Murinae</taxon>
        <taxon>Rattus</taxon>
    </lineage>
</organism>
<sequence>MLVRLTKLSCPAYQWFHALKIKKCLPLCAPRCSSTSAVPQITTHYTIHPREKDKRWEGVNMERFAEEADVVIVGAGPAGLSAAIRLKQLAAEQEKDIRVCLVEKAAQIGAHTLSGACLDPAAFKELFPDWKEKGAPLNTPVTEDRFAILTEKHRIPVPILPGLPMNNHGNYIVRLGHLVSWMGEQAEALGVEVYPGYAAAEVLYHEDGSVKGIATNDVGIQKDGAPKTTFERGLELHAKVTIFAEGCHGHLAKQFYKKFDLRASCDAQTYGIGLKELWVIDEKKWKPGRVDHTVGWPLDRHTYGGSFLYHLNEGEPLVAVGFVVGLDYQNPYLSPFREFQRWKHHPSIRPTLEGGKRIAYGARALNEGGLQSIPKLTFPGGLLIGCSPGFMNVPKIKGTHTAMKSGSLAAEAIFKQLTSENLQSKTAGLHVTEYEDNLKQSWVWKELHAVRNIRPSCHGILGVYGGMIYTGIFYWILRGMEPWTLKHKGSDSEQLKPAKDCTPIEYPKPDGQISFDLLSSVALSGTNHEHDQPAHLTLKDDSIPVNRNLSIYDGPEQRFCPAGVYEFVPLEQGDGFRLQINAQNCVHCKTCDIKDPSQNINWVVPEGGGGPAYNGM</sequence>
<name>ETFD_RAT</name>
<keyword id="KW-0004">4Fe-4S</keyword>
<keyword id="KW-0007">Acetylation</keyword>
<keyword id="KW-0249">Electron transport</keyword>
<keyword id="KW-0274">FAD</keyword>
<keyword id="KW-0285">Flavoprotein</keyword>
<keyword id="KW-0408">Iron</keyword>
<keyword id="KW-0411">Iron-sulfur</keyword>
<keyword id="KW-0472">Membrane</keyword>
<keyword id="KW-0479">Metal-binding</keyword>
<keyword id="KW-0496">Mitochondrion</keyword>
<keyword id="KW-0999">Mitochondrion inner membrane</keyword>
<keyword id="KW-0560">Oxidoreductase</keyword>
<keyword id="KW-0597">Phosphoprotein</keyword>
<keyword id="KW-1185">Reference proteome</keyword>
<keyword id="KW-0809">Transit peptide</keyword>
<keyword id="KW-0813">Transport</keyword>
<keyword id="KW-0830">Ubiquinone</keyword>
<feature type="transit peptide" description="Mitochondrion" evidence="5">
    <location>
        <begin position="1"/>
        <end position="32"/>
    </location>
</feature>
<feature type="chain" id="PRO_0000008664" description="Electron transfer flavoprotein-ubiquinone oxidoreductase, mitochondrial">
    <location>
        <begin position="33"/>
        <end position="616"/>
    </location>
</feature>
<feature type="intramembrane region" evidence="1">
    <location>
        <begin position="108"/>
        <end position="129"/>
    </location>
</feature>
<feature type="intramembrane region" evidence="1">
    <location>
        <begin position="427"/>
        <end position="446"/>
    </location>
</feature>
<feature type="domain" description="4Fe-4S ferredoxin-type" evidence="4">
    <location>
        <begin position="576"/>
        <end position="605"/>
    </location>
</feature>
<feature type="binding site" evidence="3">
    <location>
        <begin position="70"/>
        <end position="84"/>
    </location>
    <ligand>
        <name>FAD</name>
        <dbReference type="ChEBI" id="CHEBI:57692"/>
    </ligand>
</feature>
<feature type="binding site" evidence="1">
    <location>
        <position position="304"/>
    </location>
    <ligand>
        <name>a ubiquinone</name>
        <dbReference type="ChEBI" id="CHEBI:16389"/>
    </ligand>
</feature>
<feature type="binding site" evidence="1">
    <location>
        <position position="305"/>
    </location>
    <ligand>
        <name>a ubiquinone</name>
        <dbReference type="ChEBI" id="CHEBI:16389"/>
    </ligand>
</feature>
<feature type="binding site" evidence="3">
    <location>
        <position position="560"/>
    </location>
    <ligand>
        <name>[4Fe-4S] cluster</name>
        <dbReference type="ChEBI" id="CHEBI:49883"/>
    </ligand>
</feature>
<feature type="binding site" evidence="3">
    <location>
        <position position="585"/>
    </location>
    <ligand>
        <name>[4Fe-4S] cluster</name>
        <dbReference type="ChEBI" id="CHEBI:49883"/>
    </ligand>
</feature>
<feature type="binding site" evidence="3">
    <location>
        <position position="588"/>
    </location>
    <ligand>
        <name>[4Fe-4S] cluster</name>
        <dbReference type="ChEBI" id="CHEBI:49883"/>
    </ligand>
</feature>
<feature type="binding site" evidence="3">
    <location>
        <position position="591"/>
    </location>
    <ligand>
        <name>[4Fe-4S] cluster</name>
        <dbReference type="ChEBI" id="CHEBI:49883"/>
    </ligand>
</feature>
<feature type="modified residue" description="N6-acetyllysine" evidence="2">
    <location>
        <position position="95"/>
    </location>
</feature>
<feature type="modified residue" description="N6-acetyllysine" evidence="2">
    <location>
        <position position="131"/>
    </location>
</feature>
<feature type="modified residue" description="N6-acetyllysine" evidence="2">
    <location>
        <position position="222"/>
    </location>
</feature>
<feature type="modified residue" description="N6-acetyllysine" evidence="2">
    <location>
        <position position="356"/>
    </location>
</feature>
<feature type="modified residue" description="N6-acetyllysine" evidence="2">
    <location>
        <position position="415"/>
    </location>
</feature>
<feature type="modified residue" description="Phosphoserine" evidence="7">
    <location>
        <position position="550"/>
    </location>
</feature>
<proteinExistence type="evidence at protein level"/>
<evidence type="ECO:0000250" key="1"/>
<evidence type="ECO:0000250" key="2">
    <source>
        <dbReference type="UniProtKB" id="Q921G7"/>
    </source>
</evidence>
<evidence type="ECO:0000255" key="3"/>
<evidence type="ECO:0000255" key="4">
    <source>
        <dbReference type="PROSITE-ProRule" id="PRU00711"/>
    </source>
</evidence>
<evidence type="ECO:0000269" key="5">
    <source>
    </source>
</evidence>
<evidence type="ECO:0000305" key="6"/>
<evidence type="ECO:0007744" key="7">
    <source>
    </source>
</evidence>
<gene>
    <name type="primary">Etfdh</name>
</gene>
<comment type="function">
    <text evidence="1">Accepts electrons from ETF and reduces ubiquinone.</text>
</comment>
<comment type="catalytic activity">
    <reaction>
        <text>a ubiquinone + reduced [electron-transfer flavoprotein] = a ubiquinol + oxidized [electron-transfer flavoprotein] + H(+)</text>
        <dbReference type="Rhea" id="RHEA:24052"/>
        <dbReference type="Rhea" id="RHEA-COMP:9565"/>
        <dbReference type="Rhea" id="RHEA-COMP:9566"/>
        <dbReference type="Rhea" id="RHEA-COMP:10685"/>
        <dbReference type="Rhea" id="RHEA-COMP:10686"/>
        <dbReference type="ChEBI" id="CHEBI:15378"/>
        <dbReference type="ChEBI" id="CHEBI:16389"/>
        <dbReference type="ChEBI" id="CHEBI:17976"/>
        <dbReference type="ChEBI" id="CHEBI:57692"/>
        <dbReference type="ChEBI" id="CHEBI:58307"/>
        <dbReference type="EC" id="1.5.5.1"/>
    </reaction>
</comment>
<comment type="cofactor">
    <cofactor evidence="1">
        <name>[4Fe-4S] cluster</name>
        <dbReference type="ChEBI" id="CHEBI:49883"/>
    </cofactor>
    <text evidence="1">Binds 1 [4Fe-4S] cluster.</text>
</comment>
<comment type="cofactor">
    <cofactor evidence="1">
        <name>FAD</name>
        <dbReference type="ChEBI" id="CHEBI:57692"/>
    </cofactor>
</comment>
<comment type="subunit">
    <text evidence="1">Monomer.</text>
</comment>
<comment type="subcellular location">
    <subcellularLocation>
        <location evidence="5">Mitochondrion inner membrane</location>
    </subcellularLocation>
</comment>
<comment type="similarity">
    <text evidence="6">Belongs to the ETF-QO/FixC family.</text>
</comment>
<accession>Q6UPE1</accession>
<reference key="1">
    <citation type="journal article" date="2005" name="Sci. China, Ser. C, Life Sci.">
        <title>cDNA cloning, functional expression and cellular localization of rat liver mitochondrial electron-transfer flavoprotein-ubiquinone oxidoreductase protein.</title>
        <authorList>
            <person name="Huang S."/>
            <person name="Song W."/>
            <person name="Lin Q."/>
        </authorList>
    </citation>
    <scope>NUCLEOTIDE SEQUENCE [MRNA]</scope>
    <scope>TRANSIT PEPTIDE CLEAVAGE SITE</scope>
    <scope>SUBCELLULAR LOCATION</scope>
    <source>
        <strain>Sprague-Dawley</strain>
    </source>
</reference>
<reference key="2">
    <citation type="journal article" date="2012" name="Nat. Commun.">
        <title>Quantitative maps of protein phosphorylation sites across 14 different rat organs and tissues.</title>
        <authorList>
            <person name="Lundby A."/>
            <person name="Secher A."/>
            <person name="Lage K."/>
            <person name="Nordsborg N.B."/>
            <person name="Dmytriyev A."/>
            <person name="Lundby C."/>
            <person name="Olsen J.V."/>
        </authorList>
    </citation>
    <scope>PHOSPHORYLATION [LARGE SCALE ANALYSIS] AT SER-550</scope>
    <scope>IDENTIFICATION BY MASS SPECTROMETRY [LARGE SCALE ANALYSIS]</scope>
</reference>
<protein>
    <recommendedName>
        <fullName>Electron transfer flavoprotein-ubiquinone oxidoreductase, mitochondrial</fullName>
        <shortName>ETF-QO</shortName>
        <shortName>ETF-ubiquinone oxidoreductase</shortName>
        <ecNumber>1.5.5.1</ecNumber>
    </recommendedName>
    <alternativeName>
        <fullName>Electron-transferring-flavoprotein dehydrogenase</fullName>
        <shortName>ETF dehydrogenase</shortName>
    </alternativeName>
</protein>